<name>GSA_BRANA</name>
<sequence length="473" mass="50252">MSATLTGSGTALGFSCSSKISKRVSSSPSTRCSIKMSVSVDEKKKSFTLQKSEEAFNAAKNLMPGGVNSPVRAFKSVGGQPVLIDSVKGSKMWDIDGNEYIDYVGSWGPAIIGHADDEVLAALAETMKKGTSFGAPCLLENVLAEMVISAVPSIEMVRFVNSGTEACMGVLRLARAFTNKEKFIKFEGCYHGHANAFLVKAGSGVATLGLPDSPGVPKAATSDTLTAPYNDIEAVAKLFEAHKGEISAVILEPVVGNSGFITPTPEFINGLRQLTKDNGALLIFDEVMTGFRLAYGGAQEYFGITPDLTTLGKIIGGGLPVGAYGGRRDIMEMVAPAGPMYQAGTLSGNPLAMTAGIHTLKRLKQPGTYEYLDKITKELTNGILEAGKKTGHPMCGGYISGMFGFFFAEGPVYNFADAKKSDTEKFGKFFRGMLEEGVYFAPSQFEAGFTSLAHTSEDIQFTISAAERVLGRI</sequence>
<accession>Q85WB7</accession>
<gene>
    <name type="primary">GSA</name>
</gene>
<proteinExistence type="evidence at transcript level"/>
<reference key="1">
    <citation type="journal article" date="2003" name="Plant Mol. Biol.">
        <title>Chlorophyll reduction in the seed of Brassica napus with a glutamate 1-semialdehyde aminotransferase antisense gene.</title>
        <authorList>
            <person name="Tsang E.W.T."/>
            <person name="Yang J."/>
            <person name="Chang Q."/>
            <person name="Nowak G."/>
            <person name="Kolenovsky A."/>
            <person name="McGregor D.I."/>
            <person name="Keller W.A."/>
        </authorList>
    </citation>
    <scope>NUCLEOTIDE SEQUENCE [MRNA]</scope>
</reference>
<keyword id="KW-0149">Chlorophyll biosynthesis</keyword>
<keyword id="KW-0150">Chloroplast</keyword>
<keyword id="KW-0413">Isomerase</keyword>
<keyword id="KW-0934">Plastid</keyword>
<keyword id="KW-0627">Porphyrin biosynthesis</keyword>
<keyword id="KW-0663">Pyridoxal phosphate</keyword>
<keyword id="KW-0809">Transit peptide</keyword>
<comment type="catalytic activity">
    <reaction>
        <text>(S)-4-amino-5-oxopentanoate = 5-aminolevulinate</text>
        <dbReference type="Rhea" id="RHEA:14265"/>
        <dbReference type="ChEBI" id="CHEBI:57501"/>
        <dbReference type="ChEBI" id="CHEBI:356416"/>
        <dbReference type="EC" id="5.4.3.8"/>
    </reaction>
</comment>
<comment type="cofactor">
    <cofactor>
        <name>pyridoxal 5'-phosphate</name>
        <dbReference type="ChEBI" id="CHEBI:597326"/>
    </cofactor>
</comment>
<comment type="pathway">
    <text>Porphyrin-containing compound metabolism; protoporphyrin-IX biosynthesis; 5-aminolevulinate from L-glutamyl-tRNA(Glu): step 2/2.</text>
</comment>
<comment type="pathway">
    <text>Porphyrin-containing compound metabolism; chlorophyll biosynthesis.</text>
</comment>
<comment type="subunit">
    <text evidence="1">Homodimer.</text>
</comment>
<comment type="subcellular location">
    <subcellularLocation>
        <location>Plastid</location>
        <location>Chloroplast</location>
    </subcellularLocation>
</comment>
<comment type="similarity">
    <text evidence="2">Belongs to the class-III pyridoxal-phosphate-dependent aminotransferase family. HemL subfamily.</text>
</comment>
<dbReference type="EC" id="5.4.3.8"/>
<dbReference type="EMBL" id="AF364595">
    <property type="protein sequence ID" value="AAO63782.1"/>
    <property type="molecule type" value="mRNA"/>
</dbReference>
<dbReference type="SMR" id="Q85WB7"/>
<dbReference type="EnsemblPlants" id="CDY41519">
    <property type="protein sequence ID" value="CDY41519"/>
    <property type="gene ID" value="GSBRNA2T00073140001"/>
</dbReference>
<dbReference type="Gramene" id="CDY41519">
    <property type="protein sequence ID" value="CDY41519"/>
    <property type="gene ID" value="GSBRNA2T00073140001"/>
</dbReference>
<dbReference type="OMA" id="RDICDAN"/>
<dbReference type="OrthoDB" id="425114at2759"/>
<dbReference type="UniPathway" id="UPA00251">
    <property type="reaction ID" value="UER00317"/>
</dbReference>
<dbReference type="UniPathway" id="UPA00668"/>
<dbReference type="GO" id="GO:0009507">
    <property type="term" value="C:chloroplast"/>
    <property type="evidence" value="ECO:0007669"/>
    <property type="project" value="UniProtKB-SubCell"/>
</dbReference>
<dbReference type="GO" id="GO:0042286">
    <property type="term" value="F:glutamate-1-semialdehyde 2,1-aminomutase activity"/>
    <property type="evidence" value="ECO:0007669"/>
    <property type="project" value="UniProtKB-EC"/>
</dbReference>
<dbReference type="GO" id="GO:0030170">
    <property type="term" value="F:pyridoxal phosphate binding"/>
    <property type="evidence" value="ECO:0007669"/>
    <property type="project" value="InterPro"/>
</dbReference>
<dbReference type="GO" id="GO:0008483">
    <property type="term" value="F:transaminase activity"/>
    <property type="evidence" value="ECO:0007669"/>
    <property type="project" value="InterPro"/>
</dbReference>
<dbReference type="GO" id="GO:0015995">
    <property type="term" value="P:chlorophyll biosynthetic process"/>
    <property type="evidence" value="ECO:0007669"/>
    <property type="project" value="UniProtKB-UniPathway"/>
</dbReference>
<dbReference type="GO" id="GO:0006782">
    <property type="term" value="P:protoporphyrinogen IX biosynthetic process"/>
    <property type="evidence" value="ECO:0007669"/>
    <property type="project" value="UniProtKB-UniPathway"/>
</dbReference>
<dbReference type="CDD" id="cd00610">
    <property type="entry name" value="OAT_like"/>
    <property type="match status" value="1"/>
</dbReference>
<dbReference type="FunFam" id="3.40.640.10:FF:000021">
    <property type="entry name" value="Glutamate-1-semialdehyde 2,1-aminomutase"/>
    <property type="match status" value="1"/>
</dbReference>
<dbReference type="FunFam" id="3.90.1150.10:FF:000012">
    <property type="entry name" value="Glutamate-1-semialdehyde 2,1-aminomutase"/>
    <property type="match status" value="1"/>
</dbReference>
<dbReference type="Gene3D" id="3.90.1150.10">
    <property type="entry name" value="Aspartate Aminotransferase, domain 1"/>
    <property type="match status" value="1"/>
</dbReference>
<dbReference type="Gene3D" id="3.40.640.10">
    <property type="entry name" value="Type I PLP-dependent aspartate aminotransferase-like (Major domain)"/>
    <property type="match status" value="1"/>
</dbReference>
<dbReference type="HAMAP" id="MF_00375">
    <property type="entry name" value="HemL_aminotrans_3"/>
    <property type="match status" value="1"/>
</dbReference>
<dbReference type="InterPro" id="IPR004639">
    <property type="entry name" value="4pyrrol_synth_GluAld_NH2Trfase"/>
</dbReference>
<dbReference type="InterPro" id="IPR005814">
    <property type="entry name" value="Aminotrans_3"/>
</dbReference>
<dbReference type="InterPro" id="IPR049704">
    <property type="entry name" value="Aminotrans_3_PPA_site"/>
</dbReference>
<dbReference type="InterPro" id="IPR015424">
    <property type="entry name" value="PyrdxlP-dep_Trfase"/>
</dbReference>
<dbReference type="InterPro" id="IPR015421">
    <property type="entry name" value="PyrdxlP-dep_Trfase_major"/>
</dbReference>
<dbReference type="InterPro" id="IPR015422">
    <property type="entry name" value="PyrdxlP-dep_Trfase_small"/>
</dbReference>
<dbReference type="NCBIfam" id="TIGR00713">
    <property type="entry name" value="hemL"/>
    <property type="match status" value="1"/>
</dbReference>
<dbReference type="NCBIfam" id="NF000818">
    <property type="entry name" value="PRK00062.1"/>
    <property type="match status" value="1"/>
</dbReference>
<dbReference type="PANTHER" id="PTHR43713">
    <property type="entry name" value="GLUTAMATE-1-SEMIALDEHYDE 2,1-AMINOMUTASE"/>
    <property type="match status" value="1"/>
</dbReference>
<dbReference type="PANTHER" id="PTHR43713:SF3">
    <property type="entry name" value="GLUTAMATE-1-SEMIALDEHYDE 2,1-AMINOMUTASE 1, CHLOROPLASTIC-RELATED"/>
    <property type="match status" value="1"/>
</dbReference>
<dbReference type="Pfam" id="PF00202">
    <property type="entry name" value="Aminotran_3"/>
    <property type="match status" value="1"/>
</dbReference>
<dbReference type="SUPFAM" id="SSF53383">
    <property type="entry name" value="PLP-dependent transferases"/>
    <property type="match status" value="1"/>
</dbReference>
<dbReference type="PROSITE" id="PS00600">
    <property type="entry name" value="AA_TRANSFER_CLASS_3"/>
    <property type="match status" value="1"/>
</dbReference>
<protein>
    <recommendedName>
        <fullName>Glutamate-1-semialdehyde 2,1-aminomutase, chloroplastic</fullName>
        <shortName>GSA</shortName>
        <ecNumber>5.4.3.8</ecNumber>
    </recommendedName>
    <alternativeName>
        <fullName>Glutamate-1-semialdehyde aminotransferase</fullName>
        <shortName>GSA-AT</shortName>
    </alternativeName>
</protein>
<organism>
    <name type="scientific">Brassica napus</name>
    <name type="common">Rape</name>
    <dbReference type="NCBI Taxonomy" id="3708"/>
    <lineage>
        <taxon>Eukaryota</taxon>
        <taxon>Viridiplantae</taxon>
        <taxon>Streptophyta</taxon>
        <taxon>Embryophyta</taxon>
        <taxon>Tracheophyta</taxon>
        <taxon>Spermatophyta</taxon>
        <taxon>Magnoliopsida</taxon>
        <taxon>eudicotyledons</taxon>
        <taxon>Gunneridae</taxon>
        <taxon>Pentapetalae</taxon>
        <taxon>rosids</taxon>
        <taxon>malvids</taxon>
        <taxon>Brassicales</taxon>
        <taxon>Brassicaceae</taxon>
        <taxon>Brassiceae</taxon>
        <taxon>Brassica</taxon>
    </lineage>
</organism>
<feature type="transit peptide" description="Chloroplast" evidence="1">
    <location>
        <begin position="1"/>
        <end position="37"/>
    </location>
</feature>
<feature type="chain" id="PRO_0000041970" description="Glutamate-1-semialdehyde 2,1-aminomutase, chloroplastic">
    <location>
        <begin position="38"/>
        <end position="473"/>
    </location>
</feature>
<feature type="modified residue" description="N6-(pyridoxal phosphate)lysine" evidence="1">
    <location>
        <position position="313"/>
    </location>
</feature>
<evidence type="ECO:0000250" key="1"/>
<evidence type="ECO:0000305" key="2"/>